<geneLocation type="mitochondrion"/>
<accession>P15581</accession>
<feature type="chain" id="PRO_0000117965" description="NADH-ubiquinone oxidoreductase chain 4">
    <location>
        <begin position="1"/>
        <end position="474"/>
    </location>
</feature>
<feature type="transmembrane region" description="Helical" evidence="2">
    <location>
        <begin position="34"/>
        <end position="54"/>
    </location>
</feature>
<feature type="transmembrane region" description="Helical" evidence="2">
    <location>
        <begin position="86"/>
        <end position="106"/>
    </location>
</feature>
<feature type="transmembrane region" description="Helical" evidence="2">
    <location>
        <begin position="115"/>
        <end position="135"/>
    </location>
</feature>
<feature type="transmembrane region" description="Helical" evidence="2">
    <location>
        <begin position="137"/>
        <end position="157"/>
    </location>
</feature>
<feature type="transmembrane region" description="Helical" evidence="2">
    <location>
        <begin position="167"/>
        <end position="187"/>
    </location>
</feature>
<feature type="transmembrane region" description="Helical" evidence="2">
    <location>
        <begin position="211"/>
        <end position="231"/>
    </location>
</feature>
<feature type="transmembrane region" description="Helical" evidence="2">
    <location>
        <begin position="242"/>
        <end position="262"/>
    </location>
</feature>
<feature type="transmembrane region" description="Helical" evidence="2">
    <location>
        <begin position="276"/>
        <end position="295"/>
    </location>
</feature>
<feature type="transmembrane region" description="Helical" evidence="2">
    <location>
        <begin position="302"/>
        <end position="322"/>
    </location>
</feature>
<feature type="transmembrane region" description="Helical" evidence="2">
    <location>
        <begin position="325"/>
        <end position="345"/>
    </location>
</feature>
<feature type="transmembrane region" description="Helical" evidence="2">
    <location>
        <begin position="373"/>
        <end position="393"/>
    </location>
</feature>
<feature type="transmembrane region" description="Helical" evidence="2">
    <location>
        <begin position="405"/>
        <end position="425"/>
    </location>
</feature>
<feature type="transmembrane region" description="Helical" evidence="2">
    <location>
        <begin position="454"/>
        <end position="474"/>
    </location>
</feature>
<evidence type="ECO:0000250" key="1"/>
<evidence type="ECO:0000255" key="2"/>
<evidence type="ECO:0000305" key="3"/>
<organism>
    <name type="scientific">Paramecium tetraurelia</name>
    <dbReference type="NCBI Taxonomy" id="5888"/>
    <lineage>
        <taxon>Eukaryota</taxon>
        <taxon>Sar</taxon>
        <taxon>Alveolata</taxon>
        <taxon>Ciliophora</taxon>
        <taxon>Intramacronucleata</taxon>
        <taxon>Oligohymenophorea</taxon>
        <taxon>Peniculida</taxon>
        <taxon>Parameciidae</taxon>
        <taxon>Paramecium</taxon>
    </lineage>
</organism>
<keyword id="KW-0249">Electron transport</keyword>
<keyword id="KW-0472">Membrane</keyword>
<keyword id="KW-0496">Mitochondrion</keyword>
<keyword id="KW-0520">NAD</keyword>
<keyword id="KW-0679">Respiratory chain</keyword>
<keyword id="KW-1278">Translocase</keyword>
<keyword id="KW-0812">Transmembrane</keyword>
<keyword id="KW-1133">Transmembrane helix</keyword>
<keyword id="KW-0813">Transport</keyword>
<keyword id="KW-0830">Ubiquinone</keyword>
<sequence length="474" mass="54190">MFAVYLVFSFKKPEASKADLDFFMLTFKYILKGSFFLMLVLALFCALFTFDLMFSAKNLLYPNEYIWDSGDFFFYKNGALKFSLNLYGLILVFLCLLTGFVAISTVDNLYSEDKLKFYLIFFQFFLAVLGFIKCSDLIAFFFFYEVLMLGSVLVVFFGSYSKKSIHAVIYFVAWTQLGSLFVLLACLYIYSLTNSTNFFVIKTFVFSKTQAMTIYSLLFVGFGIKFPIWPLHYWLTKTHVEASTGFSIYLSGFLVKTALFGFYRLTNLIQVELDTTFFLAVLVAGVIDSSLNMWSQTDLKKLVAYCTIQEMNLIAIFFLKGDSSLIAYGFLFTIMHALMSTLMFFLVECIYSRYKSRSTLVVNGVFFSFNNLALAIIFMVLFFSGILGTLKFVCEFFVFNLTLHVSWPIGVIFVVVVSAIGLIGFSKNWFNAIFCAPSKDVGPDALDLSKKELYIIFLCFAGLIFLTFLPFLMI</sequence>
<reference key="1">
    <citation type="journal article" date="1990" name="Nucleic Acids Res.">
        <title>Nucleotide sequence of the mitochondrial genome of Paramecium.</title>
        <authorList>
            <person name="Pritchard A.E."/>
            <person name="Seilhamer J.J."/>
            <person name="Mahalingam R."/>
            <person name="Sable C.L."/>
            <person name="Venuti S.E."/>
            <person name="Cummings D.J."/>
        </authorList>
    </citation>
    <scope>NUCLEOTIDE SEQUENCE [GENOMIC DNA]</scope>
    <source>
        <strain>Stock 51</strain>
    </source>
</reference>
<proteinExistence type="inferred from homology"/>
<name>NU4M_PARTE</name>
<gene>
    <name type="primary">ND4</name>
    <name type="synonym">NDH4</name>
</gene>
<protein>
    <recommendedName>
        <fullName>NADH-ubiquinone oxidoreductase chain 4</fullName>
        <ecNumber>7.1.1.2</ecNumber>
    </recommendedName>
    <alternativeName>
        <fullName>NADH dehydrogenase subunit 4</fullName>
    </alternativeName>
</protein>
<dbReference type="EC" id="7.1.1.2"/>
<dbReference type="EMBL" id="X15917">
    <property type="protein sequence ID" value="CAA34033.1"/>
    <property type="molecule type" value="Genomic_DNA"/>
</dbReference>
<dbReference type="PIR" id="S07754">
    <property type="entry name" value="S07754"/>
</dbReference>
<dbReference type="SMR" id="P15581"/>
<dbReference type="GO" id="GO:0031966">
    <property type="term" value="C:mitochondrial membrane"/>
    <property type="evidence" value="ECO:0007669"/>
    <property type="project" value="UniProtKB-SubCell"/>
</dbReference>
<dbReference type="GO" id="GO:0008137">
    <property type="term" value="F:NADH dehydrogenase (ubiquinone) activity"/>
    <property type="evidence" value="ECO:0007669"/>
    <property type="project" value="UniProtKB-EC"/>
</dbReference>
<dbReference type="GO" id="GO:0042773">
    <property type="term" value="P:ATP synthesis coupled electron transport"/>
    <property type="evidence" value="ECO:0007669"/>
    <property type="project" value="InterPro"/>
</dbReference>
<dbReference type="InterPro" id="IPR003918">
    <property type="entry name" value="NADH_UbQ_OxRdtase"/>
</dbReference>
<dbReference type="InterPro" id="IPR001750">
    <property type="entry name" value="ND/Mrp_TM"/>
</dbReference>
<dbReference type="PANTHER" id="PTHR43507">
    <property type="entry name" value="NADH-UBIQUINONE OXIDOREDUCTASE CHAIN 4"/>
    <property type="match status" value="1"/>
</dbReference>
<dbReference type="PANTHER" id="PTHR43507:SF1">
    <property type="entry name" value="NADH-UBIQUINONE OXIDOREDUCTASE CHAIN 4"/>
    <property type="match status" value="1"/>
</dbReference>
<dbReference type="Pfam" id="PF00361">
    <property type="entry name" value="Proton_antipo_M"/>
    <property type="match status" value="1"/>
</dbReference>
<dbReference type="PRINTS" id="PR01437">
    <property type="entry name" value="NUOXDRDTASE4"/>
</dbReference>
<comment type="function">
    <text evidence="1">Core subunit of the mitochondrial membrane respiratory chain NADH dehydrogenase (Complex I) that is believed to belong to the minimal assembly required for catalysis. Complex I functions in the transfer of electrons from NADH to the respiratory chain. The immediate electron acceptor for the enzyme is believed to be ubiquinone (By similarity).</text>
</comment>
<comment type="catalytic activity">
    <reaction>
        <text>a ubiquinone + NADH + 5 H(+)(in) = a ubiquinol + NAD(+) + 4 H(+)(out)</text>
        <dbReference type="Rhea" id="RHEA:29091"/>
        <dbReference type="Rhea" id="RHEA-COMP:9565"/>
        <dbReference type="Rhea" id="RHEA-COMP:9566"/>
        <dbReference type="ChEBI" id="CHEBI:15378"/>
        <dbReference type="ChEBI" id="CHEBI:16389"/>
        <dbReference type="ChEBI" id="CHEBI:17976"/>
        <dbReference type="ChEBI" id="CHEBI:57540"/>
        <dbReference type="ChEBI" id="CHEBI:57945"/>
        <dbReference type="EC" id="7.1.1.2"/>
    </reaction>
</comment>
<comment type="subcellular location">
    <subcellularLocation>
        <location evidence="1">Mitochondrion membrane</location>
        <topology evidence="1">Multi-pass membrane protein</topology>
    </subcellularLocation>
</comment>
<comment type="similarity">
    <text evidence="3">Belongs to the complex I subunit 4 family.</text>
</comment>